<sequence length="504" mass="55317">MNVKPEEITSIIKSQIEKYEKKIETVDSGTIIQIGDGIARVYGLNGCMAGELLEFPNDVYAMALNLEQDNVGCVLLGSQEGIKEGNTVKRTGKVVEVPVGENIIGRVVNSLGHPIDGKGAISTTETRAVELVAPGVITRQAVKQPLQTGIKAIDAMIPIGRGQRELIIGDRQTGKTAIAMDTIINQKGKDVICIYVAIGQKQSTVAHIVNNLIETNAMDYTIVVSAAASESAPLQYIAPYAGCSMGEYFMNKGKDVLIVYDDLSKHAVAYRAMSLLLRRPPGREAYPGDVFYLHSRLLERAAKLSDKLGGGSLTALPIIETLAGDVTAYIPTNVISITDGQIFLETELFYSGQRPAINAGISVSRVGGNAQIKAMKQVAGTLRIDLAQYRELASFAQFGSDLDKESKRTLEKGKRLTEILKQPQYKPMAVEKQVMILFAASRNYIMDIPVERISEFEEEFLDYMDTHHREIGDEIKEKQVISDELSDKLRNAIEEFKKIFLIEG</sequence>
<protein>
    <recommendedName>
        <fullName evidence="1">ATP synthase subunit alpha</fullName>
        <ecNumber evidence="1">7.1.2.2</ecNumber>
    </recommendedName>
    <alternativeName>
        <fullName evidence="1">ATP synthase F1 sector subunit alpha</fullName>
    </alternativeName>
    <alternativeName>
        <fullName evidence="1">F-ATPase subunit alpha</fullName>
    </alternativeName>
</protein>
<name>ATPA_CLOK1</name>
<accession>B9DX63</accession>
<feature type="chain" id="PRO_1000166531" description="ATP synthase subunit alpha">
    <location>
        <begin position="1"/>
        <end position="504"/>
    </location>
</feature>
<feature type="binding site" evidence="1">
    <location>
        <begin position="169"/>
        <end position="176"/>
    </location>
    <ligand>
        <name>ATP</name>
        <dbReference type="ChEBI" id="CHEBI:30616"/>
    </ligand>
</feature>
<feature type="site" description="Required for activity" evidence="1">
    <location>
        <position position="362"/>
    </location>
</feature>
<keyword id="KW-0066">ATP synthesis</keyword>
<keyword id="KW-0067">ATP-binding</keyword>
<keyword id="KW-1003">Cell membrane</keyword>
<keyword id="KW-0139">CF(1)</keyword>
<keyword id="KW-0375">Hydrogen ion transport</keyword>
<keyword id="KW-0406">Ion transport</keyword>
<keyword id="KW-0472">Membrane</keyword>
<keyword id="KW-0547">Nucleotide-binding</keyword>
<keyword id="KW-1278">Translocase</keyword>
<keyword id="KW-0813">Transport</keyword>
<comment type="function">
    <text evidence="1">Produces ATP from ADP in the presence of a proton gradient across the membrane. The alpha chain is a regulatory subunit.</text>
</comment>
<comment type="catalytic activity">
    <reaction evidence="1">
        <text>ATP + H2O + 4 H(+)(in) = ADP + phosphate + 5 H(+)(out)</text>
        <dbReference type="Rhea" id="RHEA:57720"/>
        <dbReference type="ChEBI" id="CHEBI:15377"/>
        <dbReference type="ChEBI" id="CHEBI:15378"/>
        <dbReference type="ChEBI" id="CHEBI:30616"/>
        <dbReference type="ChEBI" id="CHEBI:43474"/>
        <dbReference type="ChEBI" id="CHEBI:456216"/>
        <dbReference type="EC" id="7.1.2.2"/>
    </reaction>
</comment>
<comment type="subunit">
    <text evidence="1">F-type ATPases have 2 components, CF(1) - the catalytic core - and CF(0) - the membrane proton channel. CF(1) has five subunits: alpha(3), beta(3), gamma(1), delta(1), epsilon(1). CF(0) has three main subunits: a(1), b(2) and c(9-12). The alpha and beta chains form an alternating ring which encloses part of the gamma chain. CF(1) is attached to CF(0) by a central stalk formed by the gamma and epsilon chains, while a peripheral stalk is formed by the delta and b chains.</text>
</comment>
<comment type="subcellular location">
    <subcellularLocation>
        <location evidence="1">Cell membrane</location>
        <topology evidence="1">Peripheral membrane protein</topology>
    </subcellularLocation>
</comment>
<comment type="similarity">
    <text evidence="1">Belongs to the ATPase alpha/beta chains family.</text>
</comment>
<evidence type="ECO:0000255" key="1">
    <source>
        <dbReference type="HAMAP-Rule" id="MF_01346"/>
    </source>
</evidence>
<reference key="1">
    <citation type="submission" date="2005-09" db="EMBL/GenBank/DDBJ databases">
        <title>Complete genome sequence of Clostridium kluyveri and comparative genomics of Clostridia species.</title>
        <authorList>
            <person name="Inui M."/>
            <person name="Nonaka H."/>
            <person name="Shinoda Y."/>
            <person name="Ikenaga Y."/>
            <person name="Abe M."/>
            <person name="Naito K."/>
            <person name="Vertes A.A."/>
            <person name="Yukawa H."/>
        </authorList>
    </citation>
    <scope>NUCLEOTIDE SEQUENCE [LARGE SCALE GENOMIC DNA]</scope>
    <source>
        <strain>NBRC 12016</strain>
    </source>
</reference>
<dbReference type="EC" id="7.1.2.2" evidence="1"/>
<dbReference type="EMBL" id="AP009049">
    <property type="protein sequence ID" value="BAH08306.1"/>
    <property type="molecule type" value="Genomic_DNA"/>
</dbReference>
<dbReference type="RefSeq" id="WP_012621009.1">
    <property type="nucleotide sequence ID" value="NC_011837.1"/>
</dbReference>
<dbReference type="SMR" id="B9DX63"/>
<dbReference type="KEGG" id="ckr:CKR_3255"/>
<dbReference type="HOGENOM" id="CLU_010091_2_1_9"/>
<dbReference type="Proteomes" id="UP000007969">
    <property type="component" value="Chromosome"/>
</dbReference>
<dbReference type="GO" id="GO:0005886">
    <property type="term" value="C:plasma membrane"/>
    <property type="evidence" value="ECO:0007669"/>
    <property type="project" value="UniProtKB-SubCell"/>
</dbReference>
<dbReference type="GO" id="GO:0045259">
    <property type="term" value="C:proton-transporting ATP synthase complex"/>
    <property type="evidence" value="ECO:0007669"/>
    <property type="project" value="UniProtKB-KW"/>
</dbReference>
<dbReference type="GO" id="GO:0043531">
    <property type="term" value="F:ADP binding"/>
    <property type="evidence" value="ECO:0007669"/>
    <property type="project" value="TreeGrafter"/>
</dbReference>
<dbReference type="GO" id="GO:0005524">
    <property type="term" value="F:ATP binding"/>
    <property type="evidence" value="ECO:0007669"/>
    <property type="project" value="UniProtKB-UniRule"/>
</dbReference>
<dbReference type="GO" id="GO:0046933">
    <property type="term" value="F:proton-transporting ATP synthase activity, rotational mechanism"/>
    <property type="evidence" value="ECO:0007669"/>
    <property type="project" value="UniProtKB-UniRule"/>
</dbReference>
<dbReference type="CDD" id="cd18113">
    <property type="entry name" value="ATP-synt_F1_alpha_C"/>
    <property type="match status" value="1"/>
</dbReference>
<dbReference type="CDD" id="cd18116">
    <property type="entry name" value="ATP-synt_F1_alpha_N"/>
    <property type="match status" value="1"/>
</dbReference>
<dbReference type="CDD" id="cd01132">
    <property type="entry name" value="F1-ATPase_alpha_CD"/>
    <property type="match status" value="1"/>
</dbReference>
<dbReference type="FunFam" id="1.20.150.20:FF:000001">
    <property type="entry name" value="ATP synthase subunit alpha"/>
    <property type="match status" value="1"/>
</dbReference>
<dbReference type="FunFam" id="2.40.30.20:FF:000001">
    <property type="entry name" value="ATP synthase subunit alpha"/>
    <property type="match status" value="1"/>
</dbReference>
<dbReference type="FunFam" id="3.40.50.300:FF:000002">
    <property type="entry name" value="ATP synthase subunit alpha"/>
    <property type="match status" value="1"/>
</dbReference>
<dbReference type="Gene3D" id="2.40.30.20">
    <property type="match status" value="1"/>
</dbReference>
<dbReference type="Gene3D" id="1.20.150.20">
    <property type="entry name" value="ATP synthase alpha/beta chain, C-terminal domain"/>
    <property type="match status" value="1"/>
</dbReference>
<dbReference type="Gene3D" id="3.40.50.300">
    <property type="entry name" value="P-loop containing nucleotide triphosphate hydrolases"/>
    <property type="match status" value="1"/>
</dbReference>
<dbReference type="HAMAP" id="MF_01346">
    <property type="entry name" value="ATP_synth_alpha_bact"/>
    <property type="match status" value="1"/>
</dbReference>
<dbReference type="InterPro" id="IPR023366">
    <property type="entry name" value="ATP_synth_asu-like_sf"/>
</dbReference>
<dbReference type="InterPro" id="IPR000793">
    <property type="entry name" value="ATP_synth_asu_C"/>
</dbReference>
<dbReference type="InterPro" id="IPR038376">
    <property type="entry name" value="ATP_synth_asu_C_sf"/>
</dbReference>
<dbReference type="InterPro" id="IPR033732">
    <property type="entry name" value="ATP_synth_F1_a_nt-bd_dom"/>
</dbReference>
<dbReference type="InterPro" id="IPR005294">
    <property type="entry name" value="ATP_synth_F1_asu"/>
</dbReference>
<dbReference type="InterPro" id="IPR020003">
    <property type="entry name" value="ATPase_a/bsu_AS"/>
</dbReference>
<dbReference type="InterPro" id="IPR004100">
    <property type="entry name" value="ATPase_F1/V1/A1_a/bsu_N"/>
</dbReference>
<dbReference type="InterPro" id="IPR036121">
    <property type="entry name" value="ATPase_F1/V1/A1_a/bsu_N_sf"/>
</dbReference>
<dbReference type="InterPro" id="IPR000194">
    <property type="entry name" value="ATPase_F1/V1/A1_a/bsu_nucl-bd"/>
</dbReference>
<dbReference type="InterPro" id="IPR027417">
    <property type="entry name" value="P-loop_NTPase"/>
</dbReference>
<dbReference type="NCBIfam" id="TIGR00962">
    <property type="entry name" value="atpA"/>
    <property type="match status" value="1"/>
</dbReference>
<dbReference type="NCBIfam" id="NF009884">
    <property type="entry name" value="PRK13343.1"/>
    <property type="match status" value="1"/>
</dbReference>
<dbReference type="PANTHER" id="PTHR48082">
    <property type="entry name" value="ATP SYNTHASE SUBUNIT ALPHA, MITOCHONDRIAL"/>
    <property type="match status" value="1"/>
</dbReference>
<dbReference type="PANTHER" id="PTHR48082:SF2">
    <property type="entry name" value="ATP SYNTHASE SUBUNIT ALPHA, MITOCHONDRIAL"/>
    <property type="match status" value="1"/>
</dbReference>
<dbReference type="Pfam" id="PF00006">
    <property type="entry name" value="ATP-synt_ab"/>
    <property type="match status" value="1"/>
</dbReference>
<dbReference type="Pfam" id="PF00306">
    <property type="entry name" value="ATP-synt_ab_C"/>
    <property type="match status" value="1"/>
</dbReference>
<dbReference type="Pfam" id="PF02874">
    <property type="entry name" value="ATP-synt_ab_N"/>
    <property type="match status" value="1"/>
</dbReference>
<dbReference type="PIRSF" id="PIRSF039088">
    <property type="entry name" value="F_ATPase_subunit_alpha"/>
    <property type="match status" value="1"/>
</dbReference>
<dbReference type="SUPFAM" id="SSF47917">
    <property type="entry name" value="C-terminal domain of alpha and beta subunits of F1 ATP synthase"/>
    <property type="match status" value="1"/>
</dbReference>
<dbReference type="SUPFAM" id="SSF50615">
    <property type="entry name" value="N-terminal domain of alpha and beta subunits of F1 ATP synthase"/>
    <property type="match status" value="1"/>
</dbReference>
<dbReference type="SUPFAM" id="SSF52540">
    <property type="entry name" value="P-loop containing nucleoside triphosphate hydrolases"/>
    <property type="match status" value="1"/>
</dbReference>
<dbReference type="PROSITE" id="PS00152">
    <property type="entry name" value="ATPASE_ALPHA_BETA"/>
    <property type="match status" value="1"/>
</dbReference>
<organism>
    <name type="scientific">Clostridium kluyveri (strain NBRC 12016)</name>
    <dbReference type="NCBI Taxonomy" id="583346"/>
    <lineage>
        <taxon>Bacteria</taxon>
        <taxon>Bacillati</taxon>
        <taxon>Bacillota</taxon>
        <taxon>Clostridia</taxon>
        <taxon>Eubacteriales</taxon>
        <taxon>Clostridiaceae</taxon>
        <taxon>Clostridium</taxon>
    </lineage>
</organism>
<gene>
    <name evidence="1" type="primary">atpA</name>
    <name type="ordered locus">CKR_3255</name>
</gene>
<proteinExistence type="inferred from homology"/>